<organism>
    <name type="scientific">Aspergillus oryzae (strain ATCC 42149 / RIB 40)</name>
    <name type="common">Yellow koji mold</name>
    <dbReference type="NCBI Taxonomy" id="510516"/>
    <lineage>
        <taxon>Eukaryota</taxon>
        <taxon>Fungi</taxon>
        <taxon>Dikarya</taxon>
        <taxon>Ascomycota</taxon>
        <taxon>Pezizomycotina</taxon>
        <taxon>Eurotiomycetes</taxon>
        <taxon>Eurotiomycetidae</taxon>
        <taxon>Eurotiales</taxon>
        <taxon>Aspergillaceae</taxon>
        <taxon>Aspergillus</taxon>
        <taxon>Aspergillus subgen. Circumdati</taxon>
    </lineage>
</organism>
<gene>
    <name type="primary">hir3</name>
    <name type="ORF">AO090012000841</name>
</gene>
<protein>
    <recommendedName>
        <fullName>Histone transcription regulator 3 homolog</fullName>
    </recommendedName>
</protein>
<keyword id="KW-0159">Chromosome partition</keyword>
<keyword id="KW-0539">Nucleus</keyword>
<keyword id="KW-1185">Reference proteome</keyword>
<keyword id="KW-0677">Repeat</keyword>
<keyword id="KW-0802">TPR repeat</keyword>
<keyword id="KW-0804">Transcription</keyword>
<keyword id="KW-0805">Transcription regulation</keyword>
<sequence length="2059" mass="230999">MSTWVALNIEPAEAVEEEVDDTKEIQIEEALKLYQNALKLHSQGPAFYAQAAEAYDALLSSEIFKYPESLSDYKRAATELELTETSDYVGNADGAEPLGDYDINDSTSSTLLQTIYLAYKNHGQFVLDSLRAIIQNAAQESDSTPGLSAEIAERASTALTSFAEALERDDTDLNLWRQSARLCSTLQSYRLARYCLESVLADDENRLEVRTEQLGLEETFAEERLRETLLSLQDRISVCQVPIKKPKKALLKFLKRQSDPYPYLPGLPDSLQNVLPSKGPLALSTARHDLKPLSPTWADLGKTILQALTDKEQGTIDLGPGTAISVSTPALSPELKATATKETQVQDQSPRAQDEELSSDPKPITHMSGEDDNNMDFQPSVKHEALDSTAEHADDHSSIDQRAEKQLIESLEIQTSQSPELANQQETPNADDADPKSSTNGARKRSSTSAVAEDQTESVRSKSRRTRLRESHAEASLQADEVSFDHNKYYEDRLEVFVRADEWMFGTVESLLSKLGIEDLGSVDELRKQISPTSDGKDLPDSDINGKAEYILPRDLRHILKGWDEGKSQATLQCDNVAALQDIQGMGKSGLAIFLEHSRKSARKLGMKQVLSGIEELLMLMNTINDGWFHLREAAFEWLKCLLMPDYGRISAQDGVFGTSNFTIINSTYTLFQWPDTLKETVVQILIREDETIYKGVSEYIEALERQILGASADTPFEYTTNHFAYLEMAQAIFELHLDIYASINNPNSEIDQGIRVQQKDRLARWSLLARTSLTHFMDYSSPGSHQDNIVLRHIWASTFHSNMTTDAEREHVLLCLQELKHLLSRLKDPVISLVNNAIMPEISIEAVDQEISKLESMDFFMRIFNTESEDPVGLIETIEPILEPASVQFVEENTSEEQGHSLPTSQLHEMGSFLDRGDATLRLFLWRRLQDAYRKIDYAPKVVSCHLRSIETIVRELWNPEHLEEPSEHRQITLLRWLKSLDGILNKTVTAVLQEPAKAYECFDMDHVKSSLSAVTLVLKLLHSFVLYEDSVRVGQLSGSDVRGALAKSLESFRDKLREMHVRCWILHYTLVREAIAQNPELFETPLEDRILYLRSVHNALGIRKMCKRSHKQFLKLVKSEIFSLDEKADYEYDICQLLYDIHGIKLSPVDGYLEDHGCPPEKLDRSTAILMIDFVMKQAKKMNIRDLSKSDLKYTIEKMQQAIGTTKSSPPLSYNKRILTAYLKSPLNPTEIFRAVRGVEDLALLPVPTESAVIAKNGWYFLLGHAALTKFRSQKRLNPVPTTDLDEAITWFRQDLEHNTQRWESWYRLAQTYDSKLEEDITWSADKINNNRTELVTWQRYAIHSYAMAVATAARNADPTPETRALVSDLYTDFGIRLYSSSREPLSMAAFSLSDFTRHYNSEENQQMYEALPFKEMRLYSVWNLASYLLKRAIPDKPKSWMTRYMLSKCLWKMFSCDDSVRGTSKHVHLDDLLDSLLDSIDALPQKRDSRSDPIFEPHYKLVSIVHKLVHRGVVTPAEGSKTLVATPWARKVPPPEEGAPWKPYIMSVIRNLKHADKSNWHHRMAVRAAHITYDDEKDAAAAAGAKGELTQQIFTKTMTIQVWRPENERPGRHFVYTTRYVYFFVALLEQLEDRASLDQLLRRVRKKQGDFINHAKLWEDLCLTYARVIRKAGNINEGHDESVFKPIGWDEFVANTARLEGLLQLAPESITLLELLRDAVELKKLNNNLMKVSLLEDLIADIYSRLYEVNMPNVIEQANEENKEKMKVDHLLMASDGAADTPTPPTSAPASEAPAPRGRTKGIARRDIQKRAETIVQRKLAPRAPIAKAPAAAESEPSHGVGAVTSAPEQTKDTATSAAVADELASGQQSDIPNSLHDSADDESELSEIDDEKLSKLAAERSLLFPNLQDRGSLDPEVGMSAAASADGDGANEGAGDGEEDADREEDADLGDEGETMVEEGETMVEEGDDGADGDEAEIDGEGEGEGEGEGEGEDEEDNEAAGEEEGVGEGDGEPEGEADANEANEMDVDDGGEQPAAAEADQESDHVSDSEAMDI</sequence>
<reference key="1">
    <citation type="journal article" date="2005" name="Nature">
        <title>Genome sequencing and analysis of Aspergillus oryzae.</title>
        <authorList>
            <person name="Machida M."/>
            <person name="Asai K."/>
            <person name="Sano M."/>
            <person name="Tanaka T."/>
            <person name="Kumagai T."/>
            <person name="Terai G."/>
            <person name="Kusumoto K."/>
            <person name="Arima T."/>
            <person name="Akita O."/>
            <person name="Kashiwagi Y."/>
            <person name="Abe K."/>
            <person name="Gomi K."/>
            <person name="Horiuchi H."/>
            <person name="Kitamoto K."/>
            <person name="Kobayashi T."/>
            <person name="Takeuchi M."/>
            <person name="Denning D.W."/>
            <person name="Galagan J.E."/>
            <person name="Nierman W.C."/>
            <person name="Yu J."/>
            <person name="Archer D.B."/>
            <person name="Bennett J.W."/>
            <person name="Bhatnagar D."/>
            <person name="Cleveland T.E."/>
            <person name="Fedorova N.D."/>
            <person name="Gotoh O."/>
            <person name="Horikawa H."/>
            <person name="Hosoyama A."/>
            <person name="Ichinomiya M."/>
            <person name="Igarashi R."/>
            <person name="Iwashita K."/>
            <person name="Juvvadi P.R."/>
            <person name="Kato M."/>
            <person name="Kato Y."/>
            <person name="Kin T."/>
            <person name="Kokubun A."/>
            <person name="Maeda H."/>
            <person name="Maeyama N."/>
            <person name="Maruyama J."/>
            <person name="Nagasaki H."/>
            <person name="Nakajima T."/>
            <person name="Oda K."/>
            <person name="Okada K."/>
            <person name="Paulsen I."/>
            <person name="Sakamoto K."/>
            <person name="Sawano T."/>
            <person name="Takahashi M."/>
            <person name="Takase K."/>
            <person name="Terabayashi Y."/>
            <person name="Wortman J.R."/>
            <person name="Yamada O."/>
            <person name="Yamagata Y."/>
            <person name="Anazawa H."/>
            <person name="Hata Y."/>
            <person name="Koide Y."/>
            <person name="Komori T."/>
            <person name="Koyama Y."/>
            <person name="Minetoki T."/>
            <person name="Suharnan S."/>
            <person name="Tanaka A."/>
            <person name="Isono K."/>
            <person name="Kuhara S."/>
            <person name="Ogasawara N."/>
            <person name="Kikuchi H."/>
        </authorList>
    </citation>
    <scope>NUCLEOTIDE SEQUENCE [LARGE SCALE GENOMIC DNA]</scope>
    <source>
        <strain>ATCC 42149 / RIB 40</strain>
    </source>
</reference>
<dbReference type="EMBL" id="BA000052">
    <property type="protein sequence ID" value="BAE60955.1"/>
    <property type="molecule type" value="Genomic_DNA"/>
</dbReference>
<dbReference type="RefSeq" id="XP_001727794.1">
    <property type="nucleotide sequence ID" value="XM_001727742.1"/>
</dbReference>
<dbReference type="SMR" id="Q2UBW0"/>
<dbReference type="STRING" id="510516.Q2UBW0"/>
<dbReference type="EnsemblFungi" id="BAE60955">
    <property type="protein sequence ID" value="BAE60955"/>
    <property type="gene ID" value="AO090012000841"/>
</dbReference>
<dbReference type="GeneID" id="5988268"/>
<dbReference type="KEGG" id="aor:AO090012000841"/>
<dbReference type="VEuPathDB" id="FungiDB:AO090012000841"/>
<dbReference type="HOGENOM" id="CLU_001419_0_0_1"/>
<dbReference type="OMA" id="WETWYRL"/>
<dbReference type="OrthoDB" id="95590at5052"/>
<dbReference type="Proteomes" id="UP000006564">
    <property type="component" value="Chromosome 4"/>
</dbReference>
<dbReference type="GO" id="GO:0000417">
    <property type="term" value="C:HIR complex"/>
    <property type="evidence" value="ECO:0007669"/>
    <property type="project" value="TreeGrafter"/>
</dbReference>
<dbReference type="GO" id="GO:0005634">
    <property type="term" value="C:nucleus"/>
    <property type="evidence" value="ECO:0007669"/>
    <property type="project" value="UniProtKB-SubCell"/>
</dbReference>
<dbReference type="GO" id="GO:0031491">
    <property type="term" value="F:nucleosome binding"/>
    <property type="evidence" value="ECO:0007669"/>
    <property type="project" value="TreeGrafter"/>
</dbReference>
<dbReference type="GO" id="GO:0006325">
    <property type="term" value="P:chromatin organization"/>
    <property type="evidence" value="ECO:0007669"/>
    <property type="project" value="InterPro"/>
</dbReference>
<dbReference type="GO" id="GO:0007059">
    <property type="term" value="P:chromosome segregation"/>
    <property type="evidence" value="ECO:0007669"/>
    <property type="project" value="UniProtKB-KW"/>
</dbReference>
<dbReference type="Gene3D" id="1.25.40.10">
    <property type="entry name" value="Tetratricopeptide repeat domain"/>
    <property type="match status" value="1"/>
</dbReference>
<dbReference type="InterPro" id="IPR033053">
    <property type="entry name" value="Hir3/CABIN1"/>
</dbReference>
<dbReference type="InterPro" id="IPR011990">
    <property type="entry name" value="TPR-like_helical_dom_sf"/>
</dbReference>
<dbReference type="PANTHER" id="PTHR15502">
    <property type="entry name" value="CALCINEURIN-BINDING PROTEIN CABIN 1-RELATED"/>
    <property type="match status" value="1"/>
</dbReference>
<dbReference type="PANTHER" id="PTHR15502:SF7">
    <property type="entry name" value="CALCINEURIN-BINDING PROTEIN CABIN-1"/>
    <property type="match status" value="1"/>
</dbReference>
<dbReference type="SUPFAM" id="SSF48452">
    <property type="entry name" value="TPR-like"/>
    <property type="match status" value="1"/>
</dbReference>
<feature type="chain" id="PRO_0000256195" description="Histone transcription regulator 3 homolog">
    <location>
        <begin position="1"/>
        <end position="2059"/>
    </location>
</feature>
<feature type="repeat" description="TPR 1">
    <location>
        <begin position="11"/>
        <end position="44"/>
    </location>
</feature>
<feature type="repeat" description="TPR 2">
    <location>
        <begin position="49"/>
        <end position="86"/>
    </location>
</feature>
<feature type="repeat" description="TPR 3">
    <location>
        <begin position="139"/>
        <end position="172"/>
    </location>
</feature>
<feature type="repeat" description="TPR 4">
    <location>
        <begin position="1029"/>
        <end position="1064"/>
    </location>
</feature>
<feature type="repeat" description="TPR 5">
    <location>
        <begin position="1271"/>
        <end position="1304"/>
    </location>
</feature>
<feature type="region of interest" description="Disordered" evidence="2">
    <location>
        <begin position="337"/>
        <end position="378"/>
    </location>
</feature>
<feature type="region of interest" description="Disordered" evidence="2">
    <location>
        <begin position="415"/>
        <end position="476"/>
    </location>
</feature>
<feature type="region of interest" description="Disordered" evidence="2">
    <location>
        <begin position="1779"/>
        <end position="1896"/>
    </location>
</feature>
<feature type="region of interest" description="Disordered" evidence="2">
    <location>
        <begin position="1908"/>
        <end position="2059"/>
    </location>
</feature>
<feature type="compositionally biased region" description="Polar residues" evidence="2">
    <location>
        <begin position="340"/>
        <end position="351"/>
    </location>
</feature>
<feature type="compositionally biased region" description="Polar residues" evidence="2">
    <location>
        <begin position="415"/>
        <end position="428"/>
    </location>
</feature>
<feature type="compositionally biased region" description="Basic and acidic residues" evidence="2">
    <location>
        <begin position="1807"/>
        <end position="1816"/>
    </location>
</feature>
<feature type="compositionally biased region" description="Low complexity" evidence="2">
    <location>
        <begin position="1825"/>
        <end position="1836"/>
    </location>
</feature>
<feature type="compositionally biased region" description="Polar residues" evidence="2">
    <location>
        <begin position="1850"/>
        <end position="1860"/>
    </location>
</feature>
<feature type="compositionally biased region" description="Acidic residues" evidence="2">
    <location>
        <begin position="1883"/>
        <end position="1894"/>
    </location>
</feature>
<feature type="compositionally biased region" description="Low complexity" evidence="2">
    <location>
        <begin position="1925"/>
        <end position="1937"/>
    </location>
</feature>
<feature type="compositionally biased region" description="Acidic residues" evidence="2">
    <location>
        <begin position="1939"/>
        <end position="2036"/>
    </location>
</feature>
<comment type="function">
    <text evidence="1">Has a role in a nucleosome assembly pathway that is required for the integrity of heterochromatin and proper chromosome segregation.</text>
</comment>
<comment type="subcellular location">
    <subcellularLocation>
        <location evidence="1">Nucleus</location>
    </subcellularLocation>
</comment>
<comment type="similarity">
    <text evidence="3">Belongs to the HIR3 family.</text>
</comment>
<accession>Q2UBW0</accession>
<evidence type="ECO:0000250" key="1"/>
<evidence type="ECO:0000256" key="2">
    <source>
        <dbReference type="SAM" id="MobiDB-lite"/>
    </source>
</evidence>
<evidence type="ECO:0000305" key="3"/>
<name>HIR3_ASPOR</name>
<proteinExistence type="inferred from homology"/>